<gene>
    <name evidence="1" type="primary">dltC</name>
    <name type="ordered locus">BAMEG_3206</name>
</gene>
<dbReference type="EMBL" id="CP001215">
    <property type="protein sequence ID" value="ACP17611.1"/>
    <property type="molecule type" value="Genomic_DNA"/>
</dbReference>
<dbReference type="RefSeq" id="WP_000807310.1">
    <property type="nucleotide sequence ID" value="NC_012581.1"/>
</dbReference>
<dbReference type="SMR" id="C3LAI0"/>
<dbReference type="GeneID" id="93009671"/>
<dbReference type="KEGG" id="bah:BAMEG_3206"/>
<dbReference type="HOGENOM" id="CLU_108696_19_0_9"/>
<dbReference type="UniPathway" id="UPA00556"/>
<dbReference type="GO" id="GO:0005737">
    <property type="term" value="C:cytoplasm"/>
    <property type="evidence" value="ECO:0007669"/>
    <property type="project" value="UniProtKB-SubCell"/>
</dbReference>
<dbReference type="GO" id="GO:0036370">
    <property type="term" value="F:D-alanyl carrier activity"/>
    <property type="evidence" value="ECO:0007669"/>
    <property type="project" value="UniProtKB-UniRule"/>
</dbReference>
<dbReference type="GO" id="GO:0071555">
    <property type="term" value="P:cell wall organization"/>
    <property type="evidence" value="ECO:0007669"/>
    <property type="project" value="UniProtKB-KW"/>
</dbReference>
<dbReference type="GO" id="GO:0070395">
    <property type="term" value="P:lipoteichoic acid biosynthetic process"/>
    <property type="evidence" value="ECO:0007669"/>
    <property type="project" value="UniProtKB-UniRule"/>
</dbReference>
<dbReference type="FunFam" id="1.10.1200.10:FF:000004">
    <property type="entry name" value="D-alanyl carrier protein"/>
    <property type="match status" value="1"/>
</dbReference>
<dbReference type="Gene3D" id="1.10.1200.10">
    <property type="entry name" value="ACP-like"/>
    <property type="match status" value="1"/>
</dbReference>
<dbReference type="HAMAP" id="MF_00565">
    <property type="entry name" value="DltC"/>
    <property type="match status" value="1"/>
</dbReference>
<dbReference type="InterPro" id="IPR036736">
    <property type="entry name" value="ACP-like_sf"/>
</dbReference>
<dbReference type="InterPro" id="IPR003230">
    <property type="entry name" value="DltC"/>
</dbReference>
<dbReference type="InterPro" id="IPR009081">
    <property type="entry name" value="PP-bd_ACP"/>
</dbReference>
<dbReference type="NCBIfam" id="TIGR01688">
    <property type="entry name" value="dltC"/>
    <property type="match status" value="1"/>
</dbReference>
<dbReference type="NCBIfam" id="NF003464">
    <property type="entry name" value="PRK05087.1"/>
    <property type="match status" value="1"/>
</dbReference>
<dbReference type="Pfam" id="PF00550">
    <property type="entry name" value="PP-binding"/>
    <property type="match status" value="1"/>
</dbReference>
<dbReference type="SUPFAM" id="SSF47336">
    <property type="entry name" value="ACP-like"/>
    <property type="match status" value="1"/>
</dbReference>
<dbReference type="PROSITE" id="PS50075">
    <property type="entry name" value="CARRIER"/>
    <property type="match status" value="1"/>
</dbReference>
<name>DLTC_BACAC</name>
<protein>
    <recommendedName>
        <fullName evidence="1">D-alanyl carrier protein</fullName>
        <shortName evidence="1">DCP</shortName>
    </recommendedName>
    <alternativeName>
        <fullName evidence="1">D-alanine--poly(phosphoribitol) ligase subunit 2</fullName>
    </alternativeName>
</protein>
<reference key="1">
    <citation type="submission" date="2008-10" db="EMBL/GenBank/DDBJ databases">
        <title>Genome sequence of Bacillus anthracis str. CDC 684.</title>
        <authorList>
            <person name="Dodson R.J."/>
            <person name="Munk A.C."/>
            <person name="Brettin T."/>
            <person name="Bruce D."/>
            <person name="Detter C."/>
            <person name="Tapia R."/>
            <person name="Han C."/>
            <person name="Sutton G."/>
            <person name="Sims D."/>
        </authorList>
    </citation>
    <scope>NUCLEOTIDE SEQUENCE [LARGE SCALE GENOMIC DNA]</scope>
    <source>
        <strain>CDC 684 / NRRL 3495</strain>
    </source>
</reference>
<comment type="function">
    <text evidence="1">Carrier protein involved in the D-alanylation of lipoteichoic acid (LTA). The loading of thioester-linked D-alanine onto DltC is catalyzed by D-alanine--D-alanyl carrier protein ligase DltA. The DltC-carried D-alanyl group is further transferred to cell membrane phosphatidylglycerol (PG) by forming an ester bond, probably catalyzed by DltD. D-alanylation of LTA plays an important role in modulating the properties of the cell wall in Gram-positive bacteria, influencing the net charge of the cell wall.</text>
</comment>
<comment type="pathway">
    <text evidence="1">Cell wall biogenesis; lipoteichoic acid biosynthesis.</text>
</comment>
<comment type="subcellular location">
    <subcellularLocation>
        <location evidence="1">Cytoplasm</location>
    </subcellularLocation>
</comment>
<comment type="PTM">
    <text evidence="1">4'-phosphopantetheine is transferred from CoA to a specific serine of apo-DCP.</text>
</comment>
<comment type="similarity">
    <text evidence="1">Belongs to the DltC family.</text>
</comment>
<organism>
    <name type="scientific">Bacillus anthracis (strain CDC 684 / NRRL 3495)</name>
    <dbReference type="NCBI Taxonomy" id="568206"/>
    <lineage>
        <taxon>Bacteria</taxon>
        <taxon>Bacillati</taxon>
        <taxon>Bacillota</taxon>
        <taxon>Bacilli</taxon>
        <taxon>Bacillales</taxon>
        <taxon>Bacillaceae</taxon>
        <taxon>Bacillus</taxon>
        <taxon>Bacillus cereus group</taxon>
    </lineage>
</organism>
<proteinExistence type="inferred from homology"/>
<accession>C3LAI0</accession>
<feature type="chain" id="PRO_1000146791" description="D-alanyl carrier protein">
    <location>
        <begin position="1"/>
        <end position="79"/>
    </location>
</feature>
<feature type="domain" description="Carrier" evidence="1">
    <location>
        <begin position="2"/>
        <end position="79"/>
    </location>
</feature>
<feature type="modified residue" description="O-(pantetheine 4'-phosphoryl)serine" evidence="1">
    <location>
        <position position="37"/>
    </location>
</feature>
<keyword id="KW-0961">Cell wall biogenesis/degradation</keyword>
<keyword id="KW-0963">Cytoplasm</keyword>
<keyword id="KW-0596">Phosphopantetheine</keyword>
<keyword id="KW-0597">Phosphoprotein</keyword>
<sequence length="79" mass="9261">MAEFKEQVLDILEEVCENDIVKENLDVQLFEEGILDSFAVVSLLVEFQERLDIEVSISDFDRDEWATPNMVIKKLEEIR</sequence>
<evidence type="ECO:0000255" key="1">
    <source>
        <dbReference type="HAMAP-Rule" id="MF_00565"/>
    </source>
</evidence>